<gene>
    <name evidence="1" type="primary">rapA</name>
    <name type="ordered locus">EcHS_A0063</name>
</gene>
<feature type="chain" id="PRO_1000088352" description="RNA polymerase-associated protein RapA">
    <location>
        <begin position="1"/>
        <end position="968"/>
    </location>
</feature>
<feature type="domain" description="Helicase ATP-binding" evidence="1">
    <location>
        <begin position="164"/>
        <end position="334"/>
    </location>
</feature>
<feature type="domain" description="Helicase C-terminal" evidence="1">
    <location>
        <begin position="490"/>
        <end position="662"/>
    </location>
</feature>
<feature type="short sequence motif" description="DEAH box">
    <location>
        <begin position="280"/>
        <end position="283"/>
    </location>
</feature>
<feature type="binding site" evidence="1">
    <location>
        <begin position="177"/>
        <end position="184"/>
    </location>
    <ligand>
        <name>ATP</name>
        <dbReference type="ChEBI" id="CHEBI:30616"/>
    </ligand>
</feature>
<dbReference type="EC" id="3.6.4.-" evidence="1"/>
<dbReference type="EMBL" id="CP000802">
    <property type="protein sequence ID" value="ABV04463.1"/>
    <property type="molecule type" value="Genomic_DNA"/>
</dbReference>
<dbReference type="RefSeq" id="WP_001117027.1">
    <property type="nucleotide sequence ID" value="NC_009800.1"/>
</dbReference>
<dbReference type="SMR" id="A7ZW09"/>
<dbReference type="KEGG" id="ecx:EcHS_A0063"/>
<dbReference type="HOGENOM" id="CLU_011520_0_0_6"/>
<dbReference type="GO" id="GO:0005524">
    <property type="term" value="F:ATP binding"/>
    <property type="evidence" value="ECO:0007669"/>
    <property type="project" value="UniProtKB-UniRule"/>
</dbReference>
<dbReference type="GO" id="GO:0003677">
    <property type="term" value="F:DNA binding"/>
    <property type="evidence" value="ECO:0007669"/>
    <property type="project" value="UniProtKB-KW"/>
</dbReference>
<dbReference type="GO" id="GO:0004386">
    <property type="term" value="F:helicase activity"/>
    <property type="evidence" value="ECO:0007669"/>
    <property type="project" value="UniProtKB-UniRule"/>
</dbReference>
<dbReference type="GO" id="GO:0016817">
    <property type="term" value="F:hydrolase activity, acting on acid anhydrides"/>
    <property type="evidence" value="ECO:0007669"/>
    <property type="project" value="InterPro"/>
</dbReference>
<dbReference type="GO" id="GO:0006355">
    <property type="term" value="P:regulation of DNA-templated transcription"/>
    <property type="evidence" value="ECO:0007669"/>
    <property type="project" value="UniProtKB-UniRule"/>
</dbReference>
<dbReference type="CDD" id="cd18011">
    <property type="entry name" value="DEXDc_RapA"/>
    <property type="match status" value="1"/>
</dbReference>
<dbReference type="CDD" id="cd18793">
    <property type="entry name" value="SF2_C_SNF"/>
    <property type="match status" value="1"/>
</dbReference>
<dbReference type="FunFam" id="2.30.30.140:FF:000020">
    <property type="entry name" value="RNA polymerase-associated protein RapA"/>
    <property type="match status" value="1"/>
</dbReference>
<dbReference type="FunFam" id="2.30.30.930:FF:000001">
    <property type="entry name" value="RNA polymerase-associated protein RapA"/>
    <property type="match status" value="1"/>
</dbReference>
<dbReference type="FunFam" id="3.30.360.80:FF:000001">
    <property type="entry name" value="RNA polymerase-associated protein RapA"/>
    <property type="match status" value="1"/>
</dbReference>
<dbReference type="FunFam" id="3.40.50.10810:FF:000012">
    <property type="entry name" value="RNA polymerase-associated protein RapA"/>
    <property type="match status" value="1"/>
</dbReference>
<dbReference type="FunFam" id="3.40.50.300:FF:000350">
    <property type="entry name" value="RNA polymerase-associated protein RapA"/>
    <property type="match status" value="1"/>
</dbReference>
<dbReference type="Gene3D" id="2.30.30.140">
    <property type="match status" value="1"/>
</dbReference>
<dbReference type="Gene3D" id="2.30.30.930">
    <property type="match status" value="1"/>
</dbReference>
<dbReference type="Gene3D" id="3.30.360.80">
    <property type="match status" value="1"/>
</dbReference>
<dbReference type="Gene3D" id="6.10.140.1500">
    <property type="match status" value="1"/>
</dbReference>
<dbReference type="Gene3D" id="6.10.140.2230">
    <property type="match status" value="1"/>
</dbReference>
<dbReference type="Gene3D" id="3.40.50.300">
    <property type="entry name" value="P-loop containing nucleotide triphosphate hydrolases"/>
    <property type="match status" value="1"/>
</dbReference>
<dbReference type="Gene3D" id="3.40.50.10810">
    <property type="entry name" value="Tandem AAA-ATPase domain"/>
    <property type="match status" value="1"/>
</dbReference>
<dbReference type="HAMAP" id="MF_01821">
    <property type="entry name" value="Helicase_RapA"/>
    <property type="match status" value="1"/>
</dbReference>
<dbReference type="InterPro" id="IPR014001">
    <property type="entry name" value="Helicase_ATP-bd"/>
</dbReference>
<dbReference type="InterPro" id="IPR001650">
    <property type="entry name" value="Helicase_C-like"/>
</dbReference>
<dbReference type="InterPro" id="IPR023949">
    <property type="entry name" value="Helicase_RapA"/>
</dbReference>
<dbReference type="InterPro" id="IPR027417">
    <property type="entry name" value="P-loop_NTPase"/>
</dbReference>
<dbReference type="InterPro" id="IPR022737">
    <property type="entry name" value="RapA_C"/>
</dbReference>
<dbReference type="InterPro" id="IPR038718">
    <property type="entry name" value="SNF2-like_sf"/>
</dbReference>
<dbReference type="InterPro" id="IPR049730">
    <property type="entry name" value="SNF2/RAD54-like_C"/>
</dbReference>
<dbReference type="InterPro" id="IPR000330">
    <property type="entry name" value="SNF2_N"/>
</dbReference>
<dbReference type="InterPro" id="IPR040765">
    <property type="entry name" value="Tudor_1_RapA"/>
</dbReference>
<dbReference type="InterPro" id="IPR040766">
    <property type="entry name" value="Tudor_2_RapA"/>
</dbReference>
<dbReference type="NCBIfam" id="NF003426">
    <property type="entry name" value="PRK04914.1"/>
    <property type="match status" value="1"/>
</dbReference>
<dbReference type="PANTHER" id="PTHR45766">
    <property type="entry name" value="DNA ANNEALING HELICASE AND ENDONUCLEASE ZRANB3 FAMILY MEMBER"/>
    <property type="match status" value="1"/>
</dbReference>
<dbReference type="PANTHER" id="PTHR45766:SF6">
    <property type="entry name" value="SWI_SNF-RELATED MATRIX-ASSOCIATED ACTIN-DEPENDENT REGULATOR OF CHROMATIN SUBFAMILY A-LIKE PROTEIN 1"/>
    <property type="match status" value="1"/>
</dbReference>
<dbReference type="Pfam" id="PF00271">
    <property type="entry name" value="Helicase_C"/>
    <property type="match status" value="1"/>
</dbReference>
<dbReference type="Pfam" id="PF12137">
    <property type="entry name" value="RapA_C"/>
    <property type="match status" value="1"/>
</dbReference>
<dbReference type="Pfam" id="PF00176">
    <property type="entry name" value="SNF2-rel_dom"/>
    <property type="match status" value="1"/>
</dbReference>
<dbReference type="Pfam" id="PF18339">
    <property type="entry name" value="Tudor_1_RapA"/>
    <property type="match status" value="1"/>
</dbReference>
<dbReference type="Pfam" id="PF18337">
    <property type="entry name" value="Tudor_RapA"/>
    <property type="match status" value="1"/>
</dbReference>
<dbReference type="SMART" id="SM00487">
    <property type="entry name" value="DEXDc"/>
    <property type="match status" value="1"/>
</dbReference>
<dbReference type="SMART" id="SM00490">
    <property type="entry name" value="HELICc"/>
    <property type="match status" value="1"/>
</dbReference>
<dbReference type="SUPFAM" id="SSF52540">
    <property type="entry name" value="P-loop containing nucleoside triphosphate hydrolases"/>
    <property type="match status" value="2"/>
</dbReference>
<dbReference type="PROSITE" id="PS51192">
    <property type="entry name" value="HELICASE_ATP_BIND_1"/>
    <property type="match status" value="1"/>
</dbReference>
<dbReference type="PROSITE" id="PS51194">
    <property type="entry name" value="HELICASE_CTER"/>
    <property type="match status" value="1"/>
</dbReference>
<organism>
    <name type="scientific">Escherichia coli O9:H4 (strain HS)</name>
    <dbReference type="NCBI Taxonomy" id="331112"/>
    <lineage>
        <taxon>Bacteria</taxon>
        <taxon>Pseudomonadati</taxon>
        <taxon>Pseudomonadota</taxon>
        <taxon>Gammaproteobacteria</taxon>
        <taxon>Enterobacterales</taxon>
        <taxon>Enterobacteriaceae</taxon>
        <taxon>Escherichia</taxon>
    </lineage>
</organism>
<accession>A7ZW09</accession>
<name>RAPA_ECOHS</name>
<evidence type="ECO:0000255" key="1">
    <source>
        <dbReference type="HAMAP-Rule" id="MF_01821"/>
    </source>
</evidence>
<protein>
    <recommendedName>
        <fullName evidence="1">RNA polymerase-associated protein RapA</fullName>
        <ecNumber evidence="1">3.6.4.-</ecNumber>
    </recommendedName>
    <alternativeName>
        <fullName evidence="1">ATP-dependent helicase HepA</fullName>
    </alternativeName>
</protein>
<keyword id="KW-0010">Activator</keyword>
<keyword id="KW-0067">ATP-binding</keyword>
<keyword id="KW-0238">DNA-binding</keyword>
<keyword id="KW-0347">Helicase</keyword>
<keyword id="KW-0378">Hydrolase</keyword>
<keyword id="KW-0547">Nucleotide-binding</keyword>
<keyword id="KW-0804">Transcription</keyword>
<keyword id="KW-0805">Transcription regulation</keyword>
<sequence length="968" mass="109711">MPFTLGQRWISDTESELGLGTVVAVDARTVTLLFPSTGENRLYARSDSPVTRVMFNPGDTITSHDGWQMQVEEVKEENGLLTYIGTRLDTEESGVALREVFLDSKLVFSKPQDRLFAGQIDRMDRFALRYRARKYSSEQFRMPYSGLRGQRTSLIPHQLNIAHDVGRRHAPRVLLADEVGLGKTIEAGMILHQQLLSGAAERVLIIVPETLQHQWLVEMLRRFNLRFALFDDERYAEAQHDAYNPFDTEQLVICSLDFARRSKQRLEHLCEAEWDLLVVDEAHHLVWSEDAPSREYQAIEQLAEHVPGVLLLTATPEQLGMESHFARLRLLDPNRFHDFAQFVEEQKNYRPVADAVAMLLAGNKLSNDELNMLGEMIGEQDIEPLLQAANSDSEDAQSARQELVSMLMDRHGTSRVLFRNTRNGVKGFPKRELHTIKLPLPTQYQTAIKVSGIMGARKSAEDRARDMLYPERIYQEFEGDNATWWNFDPRVEWLMGYLTSHRSQKVLVICAKAATALQLEQVLREREGIRAAVFHEGMSIIERDRAAAWFAEEDTGAQVLLCSEIGSEGRNFQFASHMVMFDLPFNPDLLEQRIGRLDRIGQAHDIQIHVPYLEKTAQSVLVRWYHEGLDAFEHTCPTGRTIYDSVYNGLINYLASPDQTEGFDDLIKNCREQHEALKAQLEQGRDRLLEIHSNGGEKAQALAESIEEQDDDTNLIAFAMNLFDIIGINQDDRGDNMIVLTPSDHMLVPDFPGLSEDGITITFDREVALAREDAQFITWEHPLIRNGLDLILSGDTGSSTISLLKNKALPVGTLLVELIYVVEAQAPKQLQLNRFLPPTPVRMLLDKNGNNLAAQVEFETFNRQLNAVNRHTGSKLVNAVQQDVHAILQLGEAQIEKSARALIDAARNEADEKLSAELSRLEALRAVNPNIRDDELTAIESNRQQVMESLDQAGWRLDALRLIVVTHQ</sequence>
<reference key="1">
    <citation type="journal article" date="2008" name="J. Bacteriol.">
        <title>The pangenome structure of Escherichia coli: comparative genomic analysis of E. coli commensal and pathogenic isolates.</title>
        <authorList>
            <person name="Rasko D.A."/>
            <person name="Rosovitz M.J."/>
            <person name="Myers G.S.A."/>
            <person name="Mongodin E.F."/>
            <person name="Fricke W.F."/>
            <person name="Gajer P."/>
            <person name="Crabtree J."/>
            <person name="Sebaihia M."/>
            <person name="Thomson N.R."/>
            <person name="Chaudhuri R."/>
            <person name="Henderson I.R."/>
            <person name="Sperandio V."/>
            <person name="Ravel J."/>
        </authorList>
    </citation>
    <scope>NUCLEOTIDE SEQUENCE [LARGE SCALE GENOMIC DNA]</scope>
    <source>
        <strain>HS</strain>
    </source>
</reference>
<proteinExistence type="inferred from homology"/>
<comment type="function">
    <text evidence="1">Transcription regulator that activates transcription by stimulating RNA polymerase (RNAP) recycling in case of stress conditions such as supercoiled DNA or high salt concentrations. Probably acts by releasing the RNAP, when it is trapped or immobilized on tightly supercoiled DNA. Does not activate transcription on linear DNA. Probably not involved in DNA repair.</text>
</comment>
<comment type="subunit">
    <text evidence="1">Interacts with the RNAP. Has a higher affinity for the core RNAP than for the holoenzyme. Its ATPase activity is stimulated by binding to RNAP.</text>
</comment>
<comment type="similarity">
    <text evidence="1">Belongs to the SNF2/RAD54 helicase family. RapA subfamily.</text>
</comment>